<reference evidence="6" key="1">
    <citation type="journal article" date="2005" name="Nature">
        <title>The genome of the social amoeba Dictyostelium discoideum.</title>
        <authorList>
            <person name="Eichinger L."/>
            <person name="Pachebat J.A."/>
            <person name="Gloeckner G."/>
            <person name="Rajandream M.A."/>
            <person name="Sucgang R."/>
            <person name="Berriman M."/>
            <person name="Song J."/>
            <person name="Olsen R."/>
            <person name="Szafranski K."/>
            <person name="Xu Q."/>
            <person name="Tunggal B."/>
            <person name="Kummerfeld S."/>
            <person name="Madera M."/>
            <person name="Konfortov B.A."/>
            <person name="Rivero F."/>
            <person name="Bankier A.T."/>
            <person name="Lehmann R."/>
            <person name="Hamlin N."/>
            <person name="Davies R."/>
            <person name="Gaudet P."/>
            <person name="Fey P."/>
            <person name="Pilcher K."/>
            <person name="Chen G."/>
            <person name="Saunders D."/>
            <person name="Sodergren E.J."/>
            <person name="Davis P."/>
            <person name="Kerhornou A."/>
            <person name="Nie X."/>
            <person name="Hall N."/>
            <person name="Anjard C."/>
            <person name="Hemphill L."/>
            <person name="Bason N."/>
            <person name="Farbrother P."/>
            <person name="Desany B."/>
            <person name="Just E."/>
            <person name="Morio T."/>
            <person name="Rost R."/>
            <person name="Churcher C.M."/>
            <person name="Cooper J."/>
            <person name="Haydock S."/>
            <person name="van Driessche N."/>
            <person name="Cronin A."/>
            <person name="Goodhead I."/>
            <person name="Muzny D.M."/>
            <person name="Mourier T."/>
            <person name="Pain A."/>
            <person name="Lu M."/>
            <person name="Harper D."/>
            <person name="Lindsay R."/>
            <person name="Hauser H."/>
            <person name="James K.D."/>
            <person name="Quiles M."/>
            <person name="Madan Babu M."/>
            <person name="Saito T."/>
            <person name="Buchrieser C."/>
            <person name="Wardroper A."/>
            <person name="Felder M."/>
            <person name="Thangavelu M."/>
            <person name="Johnson D."/>
            <person name="Knights A."/>
            <person name="Loulseged H."/>
            <person name="Mungall K.L."/>
            <person name="Oliver K."/>
            <person name="Price C."/>
            <person name="Quail M.A."/>
            <person name="Urushihara H."/>
            <person name="Hernandez J."/>
            <person name="Rabbinowitsch E."/>
            <person name="Steffen D."/>
            <person name="Sanders M."/>
            <person name="Ma J."/>
            <person name="Kohara Y."/>
            <person name="Sharp S."/>
            <person name="Simmonds M.N."/>
            <person name="Spiegler S."/>
            <person name="Tivey A."/>
            <person name="Sugano S."/>
            <person name="White B."/>
            <person name="Walker D."/>
            <person name="Woodward J.R."/>
            <person name="Winckler T."/>
            <person name="Tanaka Y."/>
            <person name="Shaulsky G."/>
            <person name="Schleicher M."/>
            <person name="Weinstock G.M."/>
            <person name="Rosenthal A."/>
            <person name="Cox E.C."/>
            <person name="Chisholm R.L."/>
            <person name="Gibbs R.A."/>
            <person name="Loomis W.F."/>
            <person name="Platzer M."/>
            <person name="Kay R.R."/>
            <person name="Williams J.G."/>
            <person name="Dear P.H."/>
            <person name="Noegel A.A."/>
            <person name="Barrell B.G."/>
            <person name="Kuspa A."/>
        </authorList>
    </citation>
    <scope>NUCLEOTIDE SEQUENCE [LARGE SCALE GENOMIC DNA]</scope>
    <source>
        <strain evidence="6">AX4</strain>
    </source>
</reference>
<reference evidence="4" key="2">
    <citation type="journal article" date="2018" name="Front. Microbiol.">
        <title>D-Serine Metabolism and Its Importance in Development of Dictyostelium discoideum.</title>
        <authorList>
            <person name="Ito T."/>
            <person name="Hamauchi N."/>
            <person name="Hagi T."/>
            <person name="Morohashi N."/>
            <person name="Hemmi H."/>
            <person name="Sato Y.G."/>
            <person name="Saito T."/>
            <person name="Yoshimura T."/>
        </authorList>
    </citation>
    <scope>FUNCTION</scope>
    <scope>CATALYTIC ACTIVITY</scope>
    <scope>COFACTOR</scope>
    <scope>BIOPHYSICOCHEMICAL PROPERTIES</scope>
    <scope>DISRUPTION PHENOTYPE</scope>
</reference>
<accession>Q54XE5</accession>
<protein>
    <recommendedName>
        <fullName evidence="3">D-serine dehydratase</fullName>
        <ecNumber evidence="2">4.3.1.18</ecNumber>
    </recommendedName>
    <alternativeName>
        <fullName>D-serine deaminase</fullName>
    </alternativeName>
</protein>
<evidence type="ECO:0000250" key="1">
    <source>
        <dbReference type="UniProtKB" id="A0A8V1ABE9"/>
    </source>
</evidence>
<evidence type="ECO:0000269" key="2">
    <source>
    </source>
</evidence>
<evidence type="ECO:0000303" key="3">
    <source>
    </source>
</evidence>
<evidence type="ECO:0000305" key="4"/>
<evidence type="ECO:0000312" key="5">
    <source>
        <dbReference type="EMBL" id="EAL67929.1"/>
    </source>
</evidence>
<evidence type="ECO:0000312" key="6">
    <source>
        <dbReference type="Proteomes" id="UP000002195"/>
    </source>
</evidence>
<name>DSD1_DICDI</name>
<comment type="function">
    <text evidence="2">Catalyzes the conversion of D-serine to pyruvate and ammonia (PubMed:29740415). Plays a role in D-serine detoxification (PubMed:29740415).</text>
</comment>
<comment type="catalytic activity">
    <reaction evidence="2">
        <text>D-serine = pyruvate + NH4(+)</text>
        <dbReference type="Rhea" id="RHEA:13977"/>
        <dbReference type="ChEBI" id="CHEBI:15361"/>
        <dbReference type="ChEBI" id="CHEBI:28938"/>
        <dbReference type="ChEBI" id="CHEBI:35247"/>
        <dbReference type="EC" id="4.3.1.18"/>
    </reaction>
    <physiologicalReaction direction="left-to-right" evidence="2">
        <dbReference type="Rhea" id="RHEA:13978"/>
    </physiologicalReaction>
</comment>
<comment type="cofactor">
    <cofactor evidence="2">
        <name>pyridoxal 5'-phosphate</name>
        <dbReference type="ChEBI" id="CHEBI:597326"/>
    </cofactor>
</comment>
<comment type="cofactor">
    <cofactor evidence="2">
        <name>Zn(2+)</name>
        <dbReference type="ChEBI" id="CHEBI:29105"/>
    </cofactor>
</comment>
<comment type="biophysicochemical properties">
    <kinetics>
        <KM evidence="2">0.19 mM for D-serine (at 30 degrees Celsius and at pH 8.5)</KM>
        <text evidence="2">kcat is 2.6 sec(-1) with D-serine as substrate(at 30 degrees Celsius and at pH 8.5).</text>
    </kinetics>
</comment>
<comment type="disruption phenotype">
    <text evidence="2">Knockout leads to a loss of D-serine degradation activity and an accumulation of D-serine within the organism (PubMed:29740415). Delays development with a prolonged period spent at the mound stage and decreased spore formation (PubMed:29740415). Decreases expression of acaA and carA-1 during starvation (PubMed:29740415).</text>
</comment>
<comment type="similarity">
    <text evidence="4">Belongs to the DSD1 family.</text>
</comment>
<dbReference type="EC" id="4.3.1.18" evidence="2"/>
<dbReference type="EMBL" id="AAFI02000026">
    <property type="protein sequence ID" value="EAL67929.1"/>
    <property type="molecule type" value="Genomic_DNA"/>
</dbReference>
<dbReference type="RefSeq" id="XP_641908.1">
    <property type="nucleotide sequence ID" value="XM_636816.1"/>
</dbReference>
<dbReference type="SMR" id="Q54XE5"/>
<dbReference type="STRING" id="44689.DDB0215298"/>
<dbReference type="PaxDb" id="44689-DDB0215298"/>
<dbReference type="GeneID" id="8621830"/>
<dbReference type="KEGG" id="ddi:DDB_G0279015"/>
<dbReference type="dictyBase" id="DDB_G0279015">
    <property type="gene designation" value="dsd"/>
</dbReference>
<dbReference type="VEuPathDB" id="AmoebaDB:DDB_G0279015"/>
<dbReference type="eggNOG" id="ENOG502QRZ0">
    <property type="taxonomic scope" value="Eukaryota"/>
</dbReference>
<dbReference type="HOGENOM" id="CLU_031639_2_2_1"/>
<dbReference type="InParanoid" id="Q54XE5"/>
<dbReference type="OMA" id="WPRFYGW"/>
<dbReference type="PhylomeDB" id="Q54XE5"/>
<dbReference type="Proteomes" id="UP000002195">
    <property type="component" value="Chromosome 3"/>
</dbReference>
<dbReference type="GO" id="GO:0008721">
    <property type="term" value="F:D-serine ammonia-lyase activity"/>
    <property type="evidence" value="ECO:0000314"/>
    <property type="project" value="dictyBase"/>
</dbReference>
<dbReference type="GO" id="GO:0046872">
    <property type="term" value="F:metal ion binding"/>
    <property type="evidence" value="ECO:0007669"/>
    <property type="project" value="UniProtKB-KW"/>
</dbReference>
<dbReference type="GO" id="GO:1990748">
    <property type="term" value="P:cellular detoxification"/>
    <property type="evidence" value="ECO:0000315"/>
    <property type="project" value="UniProtKB"/>
</dbReference>
<dbReference type="GO" id="GO:0036088">
    <property type="term" value="P:D-serine catabolic process"/>
    <property type="evidence" value="ECO:0000314"/>
    <property type="project" value="dictyBase"/>
</dbReference>
<dbReference type="CDD" id="cd06817">
    <property type="entry name" value="PLPDE_III_DSD"/>
    <property type="match status" value="1"/>
</dbReference>
<dbReference type="FunFam" id="3.20.20.10:FF:000016">
    <property type="entry name" value="D-serine dehydratase"/>
    <property type="match status" value="1"/>
</dbReference>
<dbReference type="Gene3D" id="3.20.20.10">
    <property type="entry name" value="Alanine racemase"/>
    <property type="match status" value="1"/>
</dbReference>
<dbReference type="Gene3D" id="2.40.37.20">
    <property type="entry name" value="D-serine dehydratase-like domain"/>
    <property type="match status" value="1"/>
</dbReference>
<dbReference type="InterPro" id="IPR001608">
    <property type="entry name" value="Ala_racemase_N"/>
</dbReference>
<dbReference type="InterPro" id="IPR051466">
    <property type="entry name" value="D-amino_acid_metab_enzyme"/>
</dbReference>
<dbReference type="InterPro" id="IPR026956">
    <property type="entry name" value="D-ser_dehydrat-like_dom"/>
</dbReference>
<dbReference type="InterPro" id="IPR042208">
    <property type="entry name" value="D-ser_dehydrat-like_sf"/>
</dbReference>
<dbReference type="InterPro" id="IPR029066">
    <property type="entry name" value="PLP-binding_barrel"/>
</dbReference>
<dbReference type="PANTHER" id="PTHR28004:SF2">
    <property type="entry name" value="D-SERINE DEHYDRATASE"/>
    <property type="match status" value="1"/>
</dbReference>
<dbReference type="PANTHER" id="PTHR28004">
    <property type="entry name" value="ZGC:162816-RELATED"/>
    <property type="match status" value="1"/>
</dbReference>
<dbReference type="Pfam" id="PF01168">
    <property type="entry name" value="Ala_racemase_N"/>
    <property type="match status" value="1"/>
</dbReference>
<dbReference type="Pfam" id="PF14031">
    <property type="entry name" value="D-ser_dehydrat"/>
    <property type="match status" value="1"/>
</dbReference>
<dbReference type="SMART" id="SM01119">
    <property type="entry name" value="D-ser_dehydrat"/>
    <property type="match status" value="1"/>
</dbReference>
<dbReference type="SUPFAM" id="SSF51419">
    <property type="entry name" value="PLP-binding barrel"/>
    <property type="match status" value="1"/>
</dbReference>
<keyword id="KW-0216">Detoxification</keyword>
<keyword id="KW-0456">Lyase</keyword>
<keyword id="KW-0479">Metal-binding</keyword>
<keyword id="KW-0663">Pyridoxal phosphate</keyword>
<keyword id="KW-1185">Reference proteome</keyword>
<keyword id="KW-0862">Zinc</keyword>
<gene>
    <name evidence="3" type="primary">dsd</name>
    <name evidence="5" type="ORF">DDB_G0279015</name>
</gene>
<sequence length="395" mass="44729">MNENNDDINNLNTPCVLVLDSVVRNNCIKMNERAASLGVNVRPHMKTHKTIEIGKYQFEENKNLNKSRGIIVSTLSEGKFFSKEFKDILYATPIAPNKVKDAYQLHLSIDRLNVMFDNIEHLKSMVDYAIKNPNEFQKKWSVFLKIDCGYHRAGADPKLQSTTDLVELIVNGEYNQYFQFQGIYSHSGHSYKCQTPTDIKNLAIEEARVTGDYGKKLKSLGYKVDTVSIGSTPVCSHLPHNLLSEYGVNEIHPGNYTFYDQMQYELGNCKLEDIGVHVLATIVSIYPERNELLVDAGSLALSSDPGCTHLRDLKVINNFGIVYNDTNLRIVAPSQEVSKIQSTNQSPIDFSKYKIGSKIRIIPNHSCLTAAMFSDYHVINNDNQIINSFKPNKHW</sequence>
<proteinExistence type="evidence at protein level"/>
<feature type="chain" id="PRO_0000460342" description="D-serine dehydratase">
    <location>
        <begin position="1"/>
        <end position="395"/>
    </location>
</feature>
<feature type="binding site" evidence="1">
    <location>
        <position position="184"/>
    </location>
    <ligand>
        <name>pyridoxal 5'-phosphate</name>
        <dbReference type="ChEBI" id="CHEBI:597326"/>
    </ligand>
</feature>
<feature type="binding site" evidence="1">
    <location>
        <position position="191"/>
    </location>
    <ligand>
        <name>pyridoxal 5'-phosphate</name>
        <dbReference type="ChEBI" id="CHEBI:597326"/>
    </ligand>
</feature>
<feature type="binding site" evidence="1">
    <location>
        <position position="232"/>
    </location>
    <ligand>
        <name>pyridoxal 5'-phosphate</name>
        <dbReference type="ChEBI" id="CHEBI:597326"/>
    </ligand>
</feature>
<feature type="binding site" evidence="1">
    <location>
        <position position="254"/>
    </location>
    <ligand>
        <name>pyridoxal 5'-phosphate</name>
        <dbReference type="ChEBI" id="CHEBI:597326"/>
    </ligand>
</feature>
<feature type="binding site" evidence="1">
    <location>
        <position position="255"/>
    </location>
    <ligand>
        <name>pyridoxal 5'-phosphate</name>
        <dbReference type="ChEBI" id="CHEBI:597326"/>
    </ligand>
</feature>
<feature type="binding site" evidence="1">
    <location>
        <position position="365"/>
    </location>
    <ligand>
        <name>Zn(2+)</name>
        <dbReference type="ChEBI" id="CHEBI:29105"/>
        <note>catalytic</note>
    </ligand>
</feature>
<feature type="binding site" evidence="1">
    <location>
        <position position="367"/>
    </location>
    <ligand>
        <name>Zn(2+)</name>
        <dbReference type="ChEBI" id="CHEBI:29105"/>
        <note>catalytic</note>
    </ligand>
</feature>
<feature type="modified residue" description="N6-(pyridoxal phosphate)lysine" evidence="1">
    <location>
        <position position="46"/>
    </location>
</feature>
<organism evidence="6">
    <name type="scientific">Dictyostelium discoideum</name>
    <name type="common">Social amoeba</name>
    <dbReference type="NCBI Taxonomy" id="44689"/>
    <lineage>
        <taxon>Eukaryota</taxon>
        <taxon>Amoebozoa</taxon>
        <taxon>Evosea</taxon>
        <taxon>Eumycetozoa</taxon>
        <taxon>Dictyostelia</taxon>
        <taxon>Dictyosteliales</taxon>
        <taxon>Dictyosteliaceae</taxon>
        <taxon>Dictyostelium</taxon>
    </lineage>
</organism>